<proteinExistence type="inferred from homology"/>
<reference key="1">
    <citation type="journal article" date="2009" name="PLoS Pathog.">
        <title>Genomic evidence for the evolution of Streptococcus equi: host restriction, increased virulence, and genetic exchange with human pathogens.</title>
        <authorList>
            <person name="Holden M.T.G."/>
            <person name="Heather Z."/>
            <person name="Paillot R."/>
            <person name="Steward K.F."/>
            <person name="Webb K."/>
            <person name="Ainslie F."/>
            <person name="Jourdan T."/>
            <person name="Bason N.C."/>
            <person name="Holroyd N.E."/>
            <person name="Mungall K."/>
            <person name="Quail M.A."/>
            <person name="Sanders M."/>
            <person name="Simmonds M."/>
            <person name="Willey D."/>
            <person name="Brooks K."/>
            <person name="Aanensen D.M."/>
            <person name="Spratt B.G."/>
            <person name="Jolley K.A."/>
            <person name="Maiden M.C.J."/>
            <person name="Kehoe M."/>
            <person name="Chanter N."/>
            <person name="Bentley S.D."/>
            <person name="Robinson C."/>
            <person name="Maskell D.J."/>
            <person name="Parkhill J."/>
            <person name="Waller A.S."/>
        </authorList>
    </citation>
    <scope>NUCLEOTIDE SEQUENCE [LARGE SCALE GENOMIC DNA]</scope>
    <source>
        <strain>4047</strain>
    </source>
</reference>
<name>RL16_STRE4</name>
<gene>
    <name evidence="1" type="primary">rplP</name>
    <name type="ordered locus">SEQ_0062</name>
</gene>
<evidence type="ECO:0000255" key="1">
    <source>
        <dbReference type="HAMAP-Rule" id="MF_01342"/>
    </source>
</evidence>
<evidence type="ECO:0000305" key="2"/>
<dbReference type="EMBL" id="FM204883">
    <property type="protein sequence ID" value="CAW91980.1"/>
    <property type="molecule type" value="Genomic_DNA"/>
</dbReference>
<dbReference type="RefSeq" id="WP_012514738.1">
    <property type="nucleotide sequence ID" value="NC_012471.1"/>
</dbReference>
<dbReference type="SMR" id="C0M8M3"/>
<dbReference type="GeneID" id="83703911"/>
<dbReference type="KEGG" id="seu:SEQ_0062"/>
<dbReference type="HOGENOM" id="CLU_078858_2_1_9"/>
<dbReference type="OrthoDB" id="9802589at2"/>
<dbReference type="Proteomes" id="UP000001365">
    <property type="component" value="Chromosome"/>
</dbReference>
<dbReference type="GO" id="GO:0022625">
    <property type="term" value="C:cytosolic large ribosomal subunit"/>
    <property type="evidence" value="ECO:0007669"/>
    <property type="project" value="TreeGrafter"/>
</dbReference>
<dbReference type="GO" id="GO:0019843">
    <property type="term" value="F:rRNA binding"/>
    <property type="evidence" value="ECO:0007669"/>
    <property type="project" value="UniProtKB-UniRule"/>
</dbReference>
<dbReference type="GO" id="GO:0003735">
    <property type="term" value="F:structural constituent of ribosome"/>
    <property type="evidence" value="ECO:0007669"/>
    <property type="project" value="InterPro"/>
</dbReference>
<dbReference type="GO" id="GO:0000049">
    <property type="term" value="F:tRNA binding"/>
    <property type="evidence" value="ECO:0007669"/>
    <property type="project" value="UniProtKB-KW"/>
</dbReference>
<dbReference type="GO" id="GO:0006412">
    <property type="term" value="P:translation"/>
    <property type="evidence" value="ECO:0007669"/>
    <property type="project" value="UniProtKB-UniRule"/>
</dbReference>
<dbReference type="CDD" id="cd01433">
    <property type="entry name" value="Ribosomal_L16_L10e"/>
    <property type="match status" value="1"/>
</dbReference>
<dbReference type="FunFam" id="3.90.1170.10:FF:000001">
    <property type="entry name" value="50S ribosomal protein L16"/>
    <property type="match status" value="1"/>
</dbReference>
<dbReference type="Gene3D" id="3.90.1170.10">
    <property type="entry name" value="Ribosomal protein L10e/L16"/>
    <property type="match status" value="1"/>
</dbReference>
<dbReference type="HAMAP" id="MF_01342">
    <property type="entry name" value="Ribosomal_uL16"/>
    <property type="match status" value="1"/>
</dbReference>
<dbReference type="InterPro" id="IPR047873">
    <property type="entry name" value="Ribosomal_uL16"/>
</dbReference>
<dbReference type="InterPro" id="IPR000114">
    <property type="entry name" value="Ribosomal_uL16_bact-type"/>
</dbReference>
<dbReference type="InterPro" id="IPR020798">
    <property type="entry name" value="Ribosomal_uL16_CS"/>
</dbReference>
<dbReference type="InterPro" id="IPR016180">
    <property type="entry name" value="Ribosomal_uL16_dom"/>
</dbReference>
<dbReference type="InterPro" id="IPR036920">
    <property type="entry name" value="Ribosomal_uL16_sf"/>
</dbReference>
<dbReference type="NCBIfam" id="TIGR01164">
    <property type="entry name" value="rplP_bact"/>
    <property type="match status" value="1"/>
</dbReference>
<dbReference type="PANTHER" id="PTHR12220">
    <property type="entry name" value="50S/60S RIBOSOMAL PROTEIN L16"/>
    <property type="match status" value="1"/>
</dbReference>
<dbReference type="PANTHER" id="PTHR12220:SF13">
    <property type="entry name" value="LARGE RIBOSOMAL SUBUNIT PROTEIN UL16M"/>
    <property type="match status" value="1"/>
</dbReference>
<dbReference type="Pfam" id="PF00252">
    <property type="entry name" value="Ribosomal_L16"/>
    <property type="match status" value="1"/>
</dbReference>
<dbReference type="PRINTS" id="PR00060">
    <property type="entry name" value="RIBOSOMALL16"/>
</dbReference>
<dbReference type="SUPFAM" id="SSF54686">
    <property type="entry name" value="Ribosomal protein L16p/L10e"/>
    <property type="match status" value="1"/>
</dbReference>
<dbReference type="PROSITE" id="PS00586">
    <property type="entry name" value="RIBOSOMAL_L16_1"/>
    <property type="match status" value="1"/>
</dbReference>
<dbReference type="PROSITE" id="PS00701">
    <property type="entry name" value="RIBOSOMAL_L16_2"/>
    <property type="match status" value="1"/>
</dbReference>
<keyword id="KW-0687">Ribonucleoprotein</keyword>
<keyword id="KW-0689">Ribosomal protein</keyword>
<keyword id="KW-0694">RNA-binding</keyword>
<keyword id="KW-0699">rRNA-binding</keyword>
<keyword id="KW-0820">tRNA-binding</keyword>
<accession>C0M8M3</accession>
<protein>
    <recommendedName>
        <fullName evidence="1">Large ribosomal subunit protein uL16</fullName>
    </recommendedName>
    <alternativeName>
        <fullName evidence="2">50S ribosomal protein L16</fullName>
    </alternativeName>
</protein>
<comment type="function">
    <text evidence="1">Binds 23S rRNA and is also seen to make contacts with the A and possibly P site tRNAs.</text>
</comment>
<comment type="subunit">
    <text evidence="1">Part of the 50S ribosomal subunit.</text>
</comment>
<comment type="similarity">
    <text evidence="1">Belongs to the universal ribosomal protein uL16 family.</text>
</comment>
<sequence>MLVPKRVKHRREFRGKMRGEAKGGKEVSFGEYGLQATTSSWITNRQIEAARIAMTRYMKRGGKVWIKIFPHKSYTAKAIGVRMGSGKGAPEGWVAPVKRGKVMFEVAGVSEEIAREALRLASHKLPVKCKFVKREAE</sequence>
<organism>
    <name type="scientific">Streptococcus equi subsp. equi (strain 4047)</name>
    <dbReference type="NCBI Taxonomy" id="553482"/>
    <lineage>
        <taxon>Bacteria</taxon>
        <taxon>Bacillati</taxon>
        <taxon>Bacillota</taxon>
        <taxon>Bacilli</taxon>
        <taxon>Lactobacillales</taxon>
        <taxon>Streptococcaceae</taxon>
        <taxon>Streptococcus</taxon>
    </lineage>
</organism>
<feature type="chain" id="PRO_1000166379" description="Large ribosomal subunit protein uL16">
    <location>
        <begin position="1"/>
        <end position="137"/>
    </location>
</feature>